<name>COBS_ECTM1</name>
<proteinExistence type="inferred from homology"/>
<evidence type="ECO:0000255" key="1">
    <source>
        <dbReference type="HAMAP-Rule" id="MF_00719"/>
    </source>
</evidence>
<protein>
    <recommendedName>
        <fullName evidence="1">Adenosylcobinamide-GDP ribazoletransferase</fullName>
        <ecNumber evidence="1">2.7.8.26</ecNumber>
    </recommendedName>
    <alternativeName>
        <fullName evidence="1">Cobalamin synthase</fullName>
    </alternativeName>
    <alternativeName>
        <fullName evidence="1">Cobalamin-5'-phosphate synthase</fullName>
    </alternativeName>
</protein>
<gene>
    <name evidence="1" type="primary">cobS</name>
    <name type="ordered locus">Pmen_1759</name>
</gene>
<feature type="chain" id="PRO_1000062091" description="Adenosylcobinamide-GDP ribazoletransferase">
    <location>
        <begin position="1"/>
        <end position="243"/>
    </location>
</feature>
<feature type="transmembrane region" description="Helical" evidence="1">
    <location>
        <begin position="31"/>
        <end position="51"/>
    </location>
</feature>
<feature type="transmembrane region" description="Helical" evidence="1">
    <location>
        <begin position="61"/>
        <end position="81"/>
    </location>
</feature>
<feature type="transmembrane region" description="Helical" evidence="1">
    <location>
        <begin position="109"/>
        <end position="129"/>
    </location>
</feature>
<feature type="transmembrane region" description="Helical" evidence="1">
    <location>
        <begin position="134"/>
        <end position="154"/>
    </location>
</feature>
<feature type="transmembrane region" description="Helical" evidence="1">
    <location>
        <begin position="188"/>
        <end position="208"/>
    </location>
</feature>
<reference key="1">
    <citation type="submission" date="2007-04" db="EMBL/GenBank/DDBJ databases">
        <title>Complete sequence of Pseudomonas mendocina ymp.</title>
        <authorList>
            <consortium name="US DOE Joint Genome Institute"/>
            <person name="Copeland A."/>
            <person name="Lucas S."/>
            <person name="Lapidus A."/>
            <person name="Barry K."/>
            <person name="Glavina del Rio T."/>
            <person name="Dalin E."/>
            <person name="Tice H."/>
            <person name="Pitluck S."/>
            <person name="Kiss H."/>
            <person name="Brettin T."/>
            <person name="Detter J.C."/>
            <person name="Bruce D."/>
            <person name="Han C."/>
            <person name="Schmutz J."/>
            <person name="Larimer F."/>
            <person name="Land M."/>
            <person name="Hauser L."/>
            <person name="Kyrpides N."/>
            <person name="Mikhailova N."/>
            <person name="Hersman L."/>
            <person name="Dubois J."/>
            <person name="Maurice P."/>
            <person name="Richardson P."/>
        </authorList>
    </citation>
    <scope>NUCLEOTIDE SEQUENCE [LARGE SCALE GENOMIC DNA]</scope>
    <source>
        <strain>ymp</strain>
    </source>
</reference>
<keyword id="KW-0997">Cell inner membrane</keyword>
<keyword id="KW-1003">Cell membrane</keyword>
<keyword id="KW-0169">Cobalamin biosynthesis</keyword>
<keyword id="KW-0460">Magnesium</keyword>
<keyword id="KW-0472">Membrane</keyword>
<keyword id="KW-0808">Transferase</keyword>
<keyword id="KW-0812">Transmembrane</keyword>
<keyword id="KW-1133">Transmembrane helix</keyword>
<dbReference type="EC" id="2.7.8.26" evidence="1"/>
<dbReference type="EMBL" id="CP000680">
    <property type="protein sequence ID" value="ABP84523.1"/>
    <property type="molecule type" value="Genomic_DNA"/>
</dbReference>
<dbReference type="STRING" id="399739.Pmen_1759"/>
<dbReference type="KEGG" id="pmy:Pmen_1759"/>
<dbReference type="PATRIC" id="fig|399739.8.peg.1783"/>
<dbReference type="eggNOG" id="COG0368">
    <property type="taxonomic scope" value="Bacteria"/>
</dbReference>
<dbReference type="HOGENOM" id="CLU_057426_3_1_6"/>
<dbReference type="OrthoDB" id="9794626at2"/>
<dbReference type="UniPathway" id="UPA00148">
    <property type="reaction ID" value="UER00238"/>
</dbReference>
<dbReference type="GO" id="GO:0005886">
    <property type="term" value="C:plasma membrane"/>
    <property type="evidence" value="ECO:0007669"/>
    <property type="project" value="UniProtKB-SubCell"/>
</dbReference>
<dbReference type="GO" id="GO:0051073">
    <property type="term" value="F:adenosylcobinamide-GDP ribazoletransferase activity"/>
    <property type="evidence" value="ECO:0007669"/>
    <property type="project" value="UniProtKB-UniRule"/>
</dbReference>
<dbReference type="GO" id="GO:0008818">
    <property type="term" value="F:cobalamin 5'-phosphate synthase activity"/>
    <property type="evidence" value="ECO:0007669"/>
    <property type="project" value="UniProtKB-UniRule"/>
</dbReference>
<dbReference type="GO" id="GO:0009236">
    <property type="term" value="P:cobalamin biosynthetic process"/>
    <property type="evidence" value="ECO:0007669"/>
    <property type="project" value="UniProtKB-UniRule"/>
</dbReference>
<dbReference type="HAMAP" id="MF_00719">
    <property type="entry name" value="CobS"/>
    <property type="match status" value="1"/>
</dbReference>
<dbReference type="InterPro" id="IPR003805">
    <property type="entry name" value="CobS"/>
</dbReference>
<dbReference type="NCBIfam" id="TIGR00317">
    <property type="entry name" value="cobS"/>
    <property type="match status" value="1"/>
</dbReference>
<dbReference type="NCBIfam" id="NF001278">
    <property type="entry name" value="PRK00235.1-5"/>
    <property type="match status" value="1"/>
</dbReference>
<dbReference type="PANTHER" id="PTHR34148">
    <property type="entry name" value="ADENOSYLCOBINAMIDE-GDP RIBAZOLETRANSFERASE"/>
    <property type="match status" value="1"/>
</dbReference>
<dbReference type="PANTHER" id="PTHR34148:SF1">
    <property type="entry name" value="ADENOSYLCOBINAMIDE-GDP RIBAZOLETRANSFERASE"/>
    <property type="match status" value="1"/>
</dbReference>
<dbReference type="Pfam" id="PF02654">
    <property type="entry name" value="CobS"/>
    <property type="match status" value="1"/>
</dbReference>
<comment type="function">
    <text evidence="1">Joins adenosylcobinamide-GDP and alpha-ribazole to generate adenosylcobalamin (Ado-cobalamin). Also synthesizes adenosylcobalamin 5'-phosphate from adenosylcobinamide-GDP and alpha-ribazole 5'-phosphate.</text>
</comment>
<comment type="catalytic activity">
    <reaction evidence="1">
        <text>alpha-ribazole + adenosylcob(III)inamide-GDP = adenosylcob(III)alamin + GMP + H(+)</text>
        <dbReference type="Rhea" id="RHEA:16049"/>
        <dbReference type="ChEBI" id="CHEBI:10329"/>
        <dbReference type="ChEBI" id="CHEBI:15378"/>
        <dbReference type="ChEBI" id="CHEBI:18408"/>
        <dbReference type="ChEBI" id="CHEBI:58115"/>
        <dbReference type="ChEBI" id="CHEBI:60487"/>
        <dbReference type="EC" id="2.7.8.26"/>
    </reaction>
</comment>
<comment type="catalytic activity">
    <reaction evidence="1">
        <text>alpha-ribazole 5'-phosphate + adenosylcob(III)inamide-GDP = adenosylcob(III)alamin 5'-phosphate + GMP + H(+)</text>
        <dbReference type="Rhea" id="RHEA:23560"/>
        <dbReference type="ChEBI" id="CHEBI:15378"/>
        <dbReference type="ChEBI" id="CHEBI:57918"/>
        <dbReference type="ChEBI" id="CHEBI:58115"/>
        <dbReference type="ChEBI" id="CHEBI:60487"/>
        <dbReference type="ChEBI" id="CHEBI:60493"/>
        <dbReference type="EC" id="2.7.8.26"/>
    </reaction>
</comment>
<comment type="cofactor">
    <cofactor evidence="1">
        <name>Mg(2+)</name>
        <dbReference type="ChEBI" id="CHEBI:18420"/>
    </cofactor>
</comment>
<comment type="pathway">
    <text evidence="1">Cofactor biosynthesis; adenosylcobalamin biosynthesis; adenosylcobalamin from cob(II)yrinate a,c-diamide: step 7/7.</text>
</comment>
<comment type="subcellular location">
    <subcellularLocation>
        <location evidence="1">Cell inner membrane</location>
        <topology evidence="1">Multi-pass membrane protein</topology>
    </subcellularLocation>
</comment>
<comment type="similarity">
    <text evidence="1">Belongs to the CobS family.</text>
</comment>
<sequence length="243" mass="25581">MIAPRIALQFLTRLPVSLPGMPTPEQIGRSLLWYPAVGLLLGLLLWLAHLLLGQTPDVLQAAIILALWVGLSGGLHLDGLADTADAWVGGFGDPGRTLAIMKDPRSGPIAVVVLVLLLLLKFAALLSLLQAGQGIYLVLLPWLGRSLLPLLLATTPYVRAGGLGQALVDHLPRRQLPWVLGGHVAAMLLLGWGALIALATALALFVWLRRALMQRLGGTTGDTAGALLELAECAALLALALSL</sequence>
<accession>A4XT57</accession>
<organism>
    <name type="scientific">Ectopseudomonas mendocina (strain ymp)</name>
    <name type="common">Pseudomonas mendocina</name>
    <dbReference type="NCBI Taxonomy" id="399739"/>
    <lineage>
        <taxon>Bacteria</taxon>
        <taxon>Pseudomonadati</taxon>
        <taxon>Pseudomonadota</taxon>
        <taxon>Gammaproteobacteria</taxon>
        <taxon>Pseudomonadales</taxon>
        <taxon>Pseudomonadaceae</taxon>
        <taxon>Ectopseudomonas</taxon>
    </lineage>
</organism>